<keyword id="KW-0413">Isomerase</keyword>
<keyword id="KW-1185">Reference proteome</keyword>
<keyword id="KW-0819">tRNA processing</keyword>
<sequence>MRVALRVAYDGSRYHGFQYQPDVPTIEGALRKALSELGLELVGYASRTDAGAHARYQVVVVEGDPELAQPDPINARLPKDIRVIAKTEVHEEFDPRRDALRKEYRYFLGPLNRPEAAARAARKLEGKHDFSAFRREDGRNPIITVERCELVEITPNAYVLRVVAPRFLWEMVRRIAGFVWEVGHGLREEGDAEALLSGKFEPSKKPRCLPAEGLILWHIEYDEVRFERTKAWFEDHKVIQLGGRLLLRLPEGAESC</sequence>
<accession>Q8TWZ3</accession>
<name>TRUA_METKA</name>
<comment type="function">
    <text evidence="1">Formation of pseudouridine at positions 38, 39 and 40 in the anticodon stem and loop of transfer RNAs.</text>
</comment>
<comment type="catalytic activity">
    <reaction evidence="1">
        <text>uridine(38/39/40) in tRNA = pseudouridine(38/39/40) in tRNA</text>
        <dbReference type="Rhea" id="RHEA:22376"/>
        <dbReference type="Rhea" id="RHEA-COMP:10085"/>
        <dbReference type="Rhea" id="RHEA-COMP:10087"/>
        <dbReference type="ChEBI" id="CHEBI:65314"/>
        <dbReference type="ChEBI" id="CHEBI:65315"/>
        <dbReference type="EC" id="5.4.99.12"/>
    </reaction>
</comment>
<comment type="similarity">
    <text evidence="1">Belongs to the tRNA pseudouridine synthase TruA family.</text>
</comment>
<reference key="1">
    <citation type="journal article" date="2002" name="Proc. Natl. Acad. Sci. U.S.A.">
        <title>The complete genome of hyperthermophile Methanopyrus kandleri AV19 and monophyly of archaeal methanogens.</title>
        <authorList>
            <person name="Slesarev A.I."/>
            <person name="Mezhevaya K.V."/>
            <person name="Makarova K.S."/>
            <person name="Polushin N.N."/>
            <person name="Shcherbinina O.V."/>
            <person name="Shakhova V.V."/>
            <person name="Belova G.I."/>
            <person name="Aravind L."/>
            <person name="Natale D.A."/>
            <person name="Rogozin I.B."/>
            <person name="Tatusov R.L."/>
            <person name="Wolf Y.I."/>
            <person name="Stetter K.O."/>
            <person name="Malykh A.G."/>
            <person name="Koonin E.V."/>
            <person name="Kozyavkin S.A."/>
        </authorList>
    </citation>
    <scope>NUCLEOTIDE SEQUENCE [LARGE SCALE GENOMIC DNA]</scope>
    <source>
        <strain>AV19 / DSM 6324 / JCM 9639 / NBRC 100938</strain>
    </source>
</reference>
<organism>
    <name type="scientific">Methanopyrus kandleri (strain AV19 / DSM 6324 / JCM 9639 / NBRC 100938)</name>
    <dbReference type="NCBI Taxonomy" id="190192"/>
    <lineage>
        <taxon>Archaea</taxon>
        <taxon>Methanobacteriati</taxon>
        <taxon>Methanobacteriota</taxon>
        <taxon>Methanomada group</taxon>
        <taxon>Methanopyri</taxon>
        <taxon>Methanopyrales</taxon>
        <taxon>Methanopyraceae</taxon>
        <taxon>Methanopyrus</taxon>
    </lineage>
</organism>
<feature type="chain" id="PRO_0000057504" description="tRNA pseudouridine synthase A">
    <location>
        <begin position="1"/>
        <end position="256"/>
    </location>
</feature>
<feature type="active site" description="Nucleophile" evidence="1">
    <location>
        <position position="49"/>
    </location>
</feature>
<feature type="binding site" evidence="1">
    <location>
        <position position="104"/>
    </location>
    <ligand>
        <name>substrate</name>
    </ligand>
</feature>
<protein>
    <recommendedName>
        <fullName evidence="1">tRNA pseudouridine synthase A</fullName>
        <ecNumber evidence="1">5.4.99.12</ecNumber>
    </recommendedName>
    <alternativeName>
        <fullName evidence="1">tRNA pseudouridine(38-40) synthase</fullName>
    </alternativeName>
    <alternativeName>
        <fullName evidence="1">tRNA pseudouridylate synthase I</fullName>
    </alternativeName>
    <alternativeName>
        <fullName evidence="1">tRNA-uridine isomerase I</fullName>
    </alternativeName>
</protein>
<gene>
    <name evidence="1" type="primary">truA</name>
    <name type="ordered locus">MK0888</name>
</gene>
<proteinExistence type="inferred from homology"/>
<evidence type="ECO:0000255" key="1">
    <source>
        <dbReference type="HAMAP-Rule" id="MF_00171"/>
    </source>
</evidence>
<dbReference type="EC" id="5.4.99.12" evidence="1"/>
<dbReference type="EMBL" id="AE009439">
    <property type="protein sequence ID" value="AAM02101.1"/>
    <property type="molecule type" value="Genomic_DNA"/>
</dbReference>
<dbReference type="RefSeq" id="WP_011019256.1">
    <property type="nucleotide sequence ID" value="NC_003551.1"/>
</dbReference>
<dbReference type="SMR" id="Q8TWZ3"/>
<dbReference type="FunCoup" id="Q8TWZ3">
    <property type="interactions" value="177"/>
</dbReference>
<dbReference type="STRING" id="190192.MK0888"/>
<dbReference type="PaxDb" id="190192-MK0888"/>
<dbReference type="EnsemblBacteria" id="AAM02101">
    <property type="protein sequence ID" value="AAM02101"/>
    <property type="gene ID" value="MK0888"/>
</dbReference>
<dbReference type="GeneID" id="1476989"/>
<dbReference type="KEGG" id="mka:MK0888"/>
<dbReference type="PATRIC" id="fig|190192.8.peg.930"/>
<dbReference type="HOGENOM" id="CLU_014673_4_2_2"/>
<dbReference type="InParanoid" id="Q8TWZ3"/>
<dbReference type="OrthoDB" id="25720at2157"/>
<dbReference type="Proteomes" id="UP000001826">
    <property type="component" value="Chromosome"/>
</dbReference>
<dbReference type="GO" id="GO:0003723">
    <property type="term" value="F:RNA binding"/>
    <property type="evidence" value="ECO:0007669"/>
    <property type="project" value="InterPro"/>
</dbReference>
<dbReference type="GO" id="GO:0160147">
    <property type="term" value="F:tRNA pseudouridine(38-40) synthase activity"/>
    <property type="evidence" value="ECO:0007669"/>
    <property type="project" value="UniProtKB-EC"/>
</dbReference>
<dbReference type="GO" id="GO:0031119">
    <property type="term" value="P:tRNA pseudouridine synthesis"/>
    <property type="evidence" value="ECO:0007669"/>
    <property type="project" value="UniProtKB-UniRule"/>
</dbReference>
<dbReference type="CDD" id="cd02866">
    <property type="entry name" value="PseudoU_synth_TruA_Archea"/>
    <property type="match status" value="1"/>
</dbReference>
<dbReference type="Gene3D" id="3.30.70.660">
    <property type="entry name" value="Pseudouridine synthase I, catalytic domain, C-terminal subdomain"/>
    <property type="match status" value="1"/>
</dbReference>
<dbReference type="HAMAP" id="MF_00171">
    <property type="entry name" value="TruA"/>
    <property type="match status" value="1"/>
</dbReference>
<dbReference type="InterPro" id="IPR020103">
    <property type="entry name" value="PsdUridine_synth_cat_dom_sf"/>
</dbReference>
<dbReference type="InterPro" id="IPR001406">
    <property type="entry name" value="PsdUridine_synth_TruA"/>
</dbReference>
<dbReference type="InterPro" id="IPR020097">
    <property type="entry name" value="PsdUridine_synth_TruA_a/b_dom"/>
</dbReference>
<dbReference type="InterPro" id="IPR020095">
    <property type="entry name" value="PsdUridine_synth_TruA_C"/>
</dbReference>
<dbReference type="PANTHER" id="PTHR11142">
    <property type="entry name" value="PSEUDOURIDYLATE SYNTHASE"/>
    <property type="match status" value="1"/>
</dbReference>
<dbReference type="PANTHER" id="PTHR11142:SF0">
    <property type="entry name" value="TRNA PSEUDOURIDINE SYNTHASE-LIKE 1"/>
    <property type="match status" value="1"/>
</dbReference>
<dbReference type="Pfam" id="PF01416">
    <property type="entry name" value="PseudoU_synth_1"/>
    <property type="match status" value="1"/>
</dbReference>
<dbReference type="PIRSF" id="PIRSF001430">
    <property type="entry name" value="tRNA_psdUrid_synth"/>
    <property type="match status" value="1"/>
</dbReference>
<dbReference type="SUPFAM" id="SSF55120">
    <property type="entry name" value="Pseudouridine synthase"/>
    <property type="match status" value="1"/>
</dbReference>